<evidence type="ECO:0000255" key="1"/>
<evidence type="ECO:0000269" key="2">
    <source>
    </source>
</evidence>
<evidence type="ECO:0000305" key="3"/>
<keyword id="KW-0325">Glycoprotein</keyword>
<keyword id="KW-0472">Membrane</keyword>
<keyword id="KW-1185">Reference proteome</keyword>
<keyword id="KW-0732">Signal</keyword>
<keyword id="KW-0812">Transmembrane</keyword>
<keyword id="KW-1133">Transmembrane helix</keyword>
<organism>
    <name type="scientific">Schizosaccharomyces pombe (strain 972 / ATCC 24843)</name>
    <name type="common">Fission yeast</name>
    <dbReference type="NCBI Taxonomy" id="284812"/>
    <lineage>
        <taxon>Eukaryota</taxon>
        <taxon>Fungi</taxon>
        <taxon>Dikarya</taxon>
        <taxon>Ascomycota</taxon>
        <taxon>Taphrinomycotina</taxon>
        <taxon>Schizosaccharomycetes</taxon>
        <taxon>Schizosaccharomycetales</taxon>
        <taxon>Schizosaccharomycetaceae</taxon>
        <taxon>Schizosaccharomyces</taxon>
    </lineage>
</organism>
<gene>
    <name type="ORF">SPAC26H5.07c</name>
</gene>
<protein>
    <recommendedName>
        <fullName>Uncharacterized protein C26H5.07c</fullName>
    </recommendedName>
</protein>
<comment type="subcellular location">
    <subcellularLocation>
        <location evidence="2">Membrane</location>
        <topology evidence="2">Multi-pass membrane protein</topology>
    </subcellularLocation>
</comment>
<comment type="similarity">
    <text evidence="3">Belongs to the LU7TM family.</text>
</comment>
<proteinExistence type="inferred from homology"/>
<name>YEG7_SCHPO</name>
<dbReference type="EMBL" id="CU329670">
    <property type="protein sequence ID" value="CAB16193.2"/>
    <property type="molecule type" value="Genomic_DNA"/>
</dbReference>
<dbReference type="EMBL" id="AB027974">
    <property type="protein sequence ID" value="BAA87278.1"/>
    <property type="molecule type" value="Genomic_DNA"/>
</dbReference>
<dbReference type="PIR" id="T38426">
    <property type="entry name" value="T38426"/>
</dbReference>
<dbReference type="RefSeq" id="NP_594454.1">
    <property type="nucleotide sequence ID" value="NM_001019883.2"/>
</dbReference>
<dbReference type="SMR" id="O13989"/>
<dbReference type="BioGRID" id="279144">
    <property type="interactions" value="12"/>
</dbReference>
<dbReference type="FunCoup" id="O13989">
    <property type="interactions" value="434"/>
</dbReference>
<dbReference type="iPTMnet" id="O13989"/>
<dbReference type="PaxDb" id="4896-SPAC26H5.07c.1"/>
<dbReference type="EnsemblFungi" id="SPAC26H5.07c.1">
    <property type="protein sequence ID" value="SPAC26H5.07c.1:pep"/>
    <property type="gene ID" value="SPAC26H5.07c"/>
</dbReference>
<dbReference type="KEGG" id="spo:2542691"/>
<dbReference type="PomBase" id="SPAC26H5.07c"/>
<dbReference type="VEuPathDB" id="FungiDB:SPAC26H5.07c"/>
<dbReference type="eggNOG" id="KOG2568">
    <property type="taxonomic scope" value="Eukaryota"/>
</dbReference>
<dbReference type="HOGENOM" id="CLU_024065_1_0_1"/>
<dbReference type="InParanoid" id="O13989"/>
<dbReference type="OMA" id="TWGFYDF"/>
<dbReference type="PhylomeDB" id="O13989"/>
<dbReference type="PRO" id="PR:O13989"/>
<dbReference type="Proteomes" id="UP000002485">
    <property type="component" value="Chromosome I"/>
</dbReference>
<dbReference type="GO" id="GO:0005737">
    <property type="term" value="C:cytoplasm"/>
    <property type="evidence" value="ECO:0007005"/>
    <property type="project" value="PomBase"/>
</dbReference>
<dbReference type="GO" id="GO:0005829">
    <property type="term" value="C:cytosol"/>
    <property type="evidence" value="ECO:0007669"/>
    <property type="project" value="GOC"/>
</dbReference>
<dbReference type="GO" id="GO:0005794">
    <property type="term" value="C:Golgi apparatus"/>
    <property type="evidence" value="ECO:0000318"/>
    <property type="project" value="GO_Central"/>
</dbReference>
<dbReference type="GO" id="GO:0016020">
    <property type="term" value="C:membrane"/>
    <property type="evidence" value="ECO:0000318"/>
    <property type="project" value="GO_Central"/>
</dbReference>
<dbReference type="GO" id="GO:0042147">
    <property type="term" value="P:retrograde transport, endosome to Golgi"/>
    <property type="evidence" value="ECO:0000318"/>
    <property type="project" value="GO_Central"/>
</dbReference>
<dbReference type="InterPro" id="IPR053937">
    <property type="entry name" value="GOST_TM"/>
</dbReference>
<dbReference type="InterPro" id="IPR009637">
    <property type="entry name" value="GPR107/GPR108-like"/>
</dbReference>
<dbReference type="InterPro" id="IPR053938">
    <property type="entry name" value="PTM1-like_N"/>
</dbReference>
<dbReference type="PANTHER" id="PTHR21229:SF1">
    <property type="entry name" value="GH17801P"/>
    <property type="match status" value="1"/>
</dbReference>
<dbReference type="PANTHER" id="PTHR21229">
    <property type="entry name" value="LUNG SEVEN TRANSMEMBRANE RECEPTOR"/>
    <property type="match status" value="1"/>
</dbReference>
<dbReference type="Pfam" id="PF06814">
    <property type="entry name" value="GOST_TM"/>
    <property type="match status" value="1"/>
</dbReference>
<dbReference type="Pfam" id="PF21902">
    <property type="entry name" value="PTM1-like_N"/>
    <property type="match status" value="1"/>
</dbReference>
<accession>O13989</accession>
<accession>Q9US86</accession>
<sequence length="505" mass="56859">MAILKSALVGFICFLHFFIVNASDNKSLLTEDIMASQVCNGMFAKKGKTSEITLKIDSYTSDFGGAIRLLIFNWKDVNAIGMEDDDGEKHYICNYEDIEAGVCKDDDYGLYLINQTAPHDSIYSAAVDAESMVSPLKYPVEQSGLYCVFTAPLEGSSEAYKITVTWENYFGNLDATDYPHLFLNPILLAINCLIGIWWSFIMFRYRHDLLQVQKYISGVVALSIVCTMVSTGYFYFANSKGYTTGSKVFAFFLSLAQSARQSYFGFLLLIVSLGYSIVVPSLGSLLRKCQILAGLQFVSSCFFLSSLFISPSNKESLVILFAAPVFLITLFAMFLWIVLALNNTIRDLRIRKQTVKAQMYTRLWIVICFGIVAYASIVAANAILIGIYGQMNYYLKYWKLLWFLNYGYTDILVLILMLTILYLWRPTENNRRFAMSEQVAQDVDEFEMTSSLSNDSLHLHHERPTSPANPHIIHGSADEHQALFAVDDESDDDASTLATSKQKPA</sequence>
<feature type="signal peptide" evidence="1">
    <location>
        <begin position="1"/>
        <end position="22"/>
    </location>
</feature>
<feature type="chain" id="PRO_0000014196" description="Uncharacterized protein C26H5.07c">
    <location>
        <begin position="23"/>
        <end position="505"/>
    </location>
</feature>
<feature type="transmembrane region" description="Helical; Name=1" evidence="1">
    <location>
        <begin position="181"/>
        <end position="201"/>
    </location>
</feature>
<feature type="transmembrane region" description="Helical; Name=2" evidence="1">
    <location>
        <begin position="216"/>
        <end position="236"/>
    </location>
</feature>
<feature type="transmembrane region" description="Helical; Name=3" evidence="1">
    <location>
        <begin position="266"/>
        <end position="286"/>
    </location>
</feature>
<feature type="transmembrane region" description="Helical; Name=4" evidence="1">
    <location>
        <begin position="291"/>
        <end position="311"/>
    </location>
</feature>
<feature type="transmembrane region" description="Helical; Name=5" evidence="1">
    <location>
        <begin position="318"/>
        <end position="338"/>
    </location>
</feature>
<feature type="transmembrane region" description="Helical; Name=6" evidence="1">
    <location>
        <begin position="365"/>
        <end position="385"/>
    </location>
</feature>
<feature type="transmembrane region" description="Helical; Name=7" evidence="1">
    <location>
        <begin position="400"/>
        <end position="420"/>
    </location>
</feature>
<feature type="glycosylation site" description="N-linked (GlcNAc...) asparagine" evidence="1">
    <location>
        <position position="25"/>
    </location>
</feature>
<feature type="glycosylation site" description="N-linked (GlcNAc...) asparagine" evidence="1">
    <location>
        <position position="114"/>
    </location>
</feature>
<feature type="glycosylation site" description="N-linked (GlcNAc...) asparagine" evidence="1">
    <location>
        <position position="342"/>
    </location>
</feature>
<feature type="glycosylation site" description="N-linked (GlcNAc...) asparagine" evidence="1">
    <location>
        <position position="454"/>
    </location>
</feature>
<reference key="1">
    <citation type="journal article" date="2002" name="Nature">
        <title>The genome sequence of Schizosaccharomyces pombe.</title>
        <authorList>
            <person name="Wood V."/>
            <person name="Gwilliam R."/>
            <person name="Rajandream M.A."/>
            <person name="Lyne M.H."/>
            <person name="Lyne R."/>
            <person name="Stewart A."/>
            <person name="Sgouros J.G."/>
            <person name="Peat N."/>
            <person name="Hayles J."/>
            <person name="Baker S.G."/>
            <person name="Basham D."/>
            <person name="Bowman S."/>
            <person name="Brooks K."/>
            <person name="Brown D."/>
            <person name="Brown S."/>
            <person name="Chillingworth T."/>
            <person name="Churcher C.M."/>
            <person name="Collins M."/>
            <person name="Connor R."/>
            <person name="Cronin A."/>
            <person name="Davis P."/>
            <person name="Feltwell T."/>
            <person name="Fraser A."/>
            <person name="Gentles S."/>
            <person name="Goble A."/>
            <person name="Hamlin N."/>
            <person name="Harris D.E."/>
            <person name="Hidalgo J."/>
            <person name="Hodgson G."/>
            <person name="Holroyd S."/>
            <person name="Hornsby T."/>
            <person name="Howarth S."/>
            <person name="Huckle E.J."/>
            <person name="Hunt S."/>
            <person name="Jagels K."/>
            <person name="James K.D."/>
            <person name="Jones L."/>
            <person name="Jones M."/>
            <person name="Leather S."/>
            <person name="McDonald S."/>
            <person name="McLean J."/>
            <person name="Mooney P."/>
            <person name="Moule S."/>
            <person name="Mungall K.L."/>
            <person name="Murphy L.D."/>
            <person name="Niblett D."/>
            <person name="Odell C."/>
            <person name="Oliver K."/>
            <person name="O'Neil S."/>
            <person name="Pearson D."/>
            <person name="Quail M.A."/>
            <person name="Rabbinowitsch E."/>
            <person name="Rutherford K.M."/>
            <person name="Rutter S."/>
            <person name="Saunders D."/>
            <person name="Seeger K."/>
            <person name="Sharp S."/>
            <person name="Skelton J."/>
            <person name="Simmonds M.N."/>
            <person name="Squares R."/>
            <person name="Squares S."/>
            <person name="Stevens K."/>
            <person name="Taylor K."/>
            <person name="Taylor R.G."/>
            <person name="Tivey A."/>
            <person name="Walsh S.V."/>
            <person name="Warren T."/>
            <person name="Whitehead S."/>
            <person name="Woodward J.R."/>
            <person name="Volckaert G."/>
            <person name="Aert R."/>
            <person name="Robben J."/>
            <person name="Grymonprez B."/>
            <person name="Weltjens I."/>
            <person name="Vanstreels E."/>
            <person name="Rieger M."/>
            <person name="Schaefer M."/>
            <person name="Mueller-Auer S."/>
            <person name="Gabel C."/>
            <person name="Fuchs M."/>
            <person name="Duesterhoeft A."/>
            <person name="Fritzc C."/>
            <person name="Holzer E."/>
            <person name="Moestl D."/>
            <person name="Hilbert H."/>
            <person name="Borzym K."/>
            <person name="Langer I."/>
            <person name="Beck A."/>
            <person name="Lehrach H."/>
            <person name="Reinhardt R."/>
            <person name="Pohl T.M."/>
            <person name="Eger P."/>
            <person name="Zimmermann W."/>
            <person name="Wedler H."/>
            <person name="Wambutt R."/>
            <person name="Purnelle B."/>
            <person name="Goffeau A."/>
            <person name="Cadieu E."/>
            <person name="Dreano S."/>
            <person name="Gloux S."/>
            <person name="Lelaure V."/>
            <person name="Mottier S."/>
            <person name="Galibert F."/>
            <person name="Aves S.J."/>
            <person name="Xiang Z."/>
            <person name="Hunt C."/>
            <person name="Moore K."/>
            <person name="Hurst S.M."/>
            <person name="Lucas M."/>
            <person name="Rochet M."/>
            <person name="Gaillardin C."/>
            <person name="Tallada V.A."/>
            <person name="Garzon A."/>
            <person name="Thode G."/>
            <person name="Daga R.R."/>
            <person name="Cruzado L."/>
            <person name="Jimenez J."/>
            <person name="Sanchez M."/>
            <person name="del Rey F."/>
            <person name="Benito J."/>
            <person name="Dominguez A."/>
            <person name="Revuelta J.L."/>
            <person name="Moreno S."/>
            <person name="Armstrong J."/>
            <person name="Forsburg S.L."/>
            <person name="Cerutti L."/>
            <person name="Lowe T."/>
            <person name="McCombie W.R."/>
            <person name="Paulsen I."/>
            <person name="Potashkin J."/>
            <person name="Shpakovski G.V."/>
            <person name="Ussery D."/>
            <person name="Barrell B.G."/>
            <person name="Nurse P."/>
        </authorList>
    </citation>
    <scope>NUCLEOTIDE SEQUENCE [LARGE SCALE GENOMIC DNA]</scope>
    <source>
        <strain>972 / ATCC 24843</strain>
    </source>
</reference>
<reference key="2">
    <citation type="journal article" date="2000" name="Genes Cells">
        <title>Large-scale screening of intracellular protein localization in living fission yeast cells by the use of a GFP-fusion genomic DNA library.</title>
        <authorList>
            <person name="Ding D.-Q."/>
            <person name="Tomita Y."/>
            <person name="Yamamoto A."/>
            <person name="Chikashige Y."/>
            <person name="Haraguchi T."/>
            <person name="Hiraoka Y."/>
        </authorList>
    </citation>
    <scope>NUCLEOTIDE SEQUENCE [LARGE SCALE GENOMIC DNA] OF 136-347</scope>
    <scope>SUBCELLULAR LOCATION</scope>
    <source>
        <strain>ATCC 38364 / 968</strain>
    </source>
</reference>